<proteinExistence type="inferred from homology"/>
<geneLocation type="chloroplast"/>
<keyword id="KW-0007">Acetylation</keyword>
<keyword id="KW-0148">Chlorophyll</keyword>
<keyword id="KW-0150">Chloroplast</keyword>
<keyword id="KW-0157">Chromophore</keyword>
<keyword id="KW-0464">Manganese</keyword>
<keyword id="KW-0472">Membrane</keyword>
<keyword id="KW-0479">Metal-binding</keyword>
<keyword id="KW-0597">Phosphoprotein</keyword>
<keyword id="KW-0602">Photosynthesis</keyword>
<keyword id="KW-0604">Photosystem II</keyword>
<keyword id="KW-0934">Plastid</keyword>
<keyword id="KW-1185">Reference proteome</keyword>
<keyword id="KW-0793">Thylakoid</keyword>
<keyword id="KW-0812">Transmembrane</keyword>
<keyword id="KW-1133">Transmembrane helix</keyword>
<protein>
    <recommendedName>
        <fullName evidence="1">Photosystem II CP43 reaction center protein</fullName>
    </recommendedName>
    <alternativeName>
        <fullName evidence="1">PSII 43 kDa protein</fullName>
    </alternativeName>
    <alternativeName>
        <fullName evidence="1">Protein CP-43</fullName>
    </alternativeName>
</protein>
<evidence type="ECO:0000255" key="1">
    <source>
        <dbReference type="HAMAP-Rule" id="MF_01496"/>
    </source>
</evidence>
<evidence type="ECO:0000305" key="2"/>
<gene>
    <name evidence="1" type="primary">psbC</name>
</gene>
<sequence>MKTLYSLRRFYHVETLFNGTLALAGRDQETTGFAWWAGNARLINLSGKLLGAHVAHAGLIVFWAGAMNLFEVAHFVPEKPMYEQGLILLPHLATLGWGVGPGGEVIDTFPYFVSGVLHLISSAVLGFGGIYHALLGPETLEESFPFFGYVWKDRNKMTTILGIHLILLGIGAFLLVFKALYFGGVYDTWAPGGGDVRKITNLTLSPSIIFGYLLKSPFGGEGWIVSVDDLEDIIGGHVWLGSICILGGIWHILTKPFAWARRALVWSGEAYLSYSLGALAVFGFIACCFVWFNNTAYPSEFYGPTGPEASQAQAFTFLVRDQRLGANVGSAQGPTGLGKYLMRSPTGEVIFGGETMRFWDLRAPWLEPLRGPNGLDLSRLKKDIQPWQERRSAEYMTHAPLGSLNSVGGVATEINAVNYVSPRSWLATSHFVLGFFFFVGHLWHAGRARAAAAGFEKGIDRDFEPVLFMTPLN</sequence>
<name>PSBC_SOLTU</name>
<reference key="1">
    <citation type="journal article" date="2006" name="Plant Cell Rep.">
        <title>The complete chloroplast genome sequences of Solanum tuberosum and comparative analysis with Solanaceae species identified the presence of a 241-bp deletion in cultivated potato chloroplast DNA sequence.</title>
        <authorList>
            <person name="Chung H.-J."/>
            <person name="Jung J.D."/>
            <person name="Park H.-W."/>
            <person name="Kim J.-H."/>
            <person name="Cha H.W."/>
            <person name="Min S.R."/>
            <person name="Jeong W.-J."/>
            <person name="Liu J.R."/>
        </authorList>
    </citation>
    <scope>NUCLEOTIDE SEQUENCE [LARGE SCALE GENOMIC DNA]</scope>
    <source>
        <strain>cv. Desiree</strain>
    </source>
</reference>
<reference key="2">
    <citation type="submission" date="2006-02" db="EMBL/GenBank/DDBJ databases">
        <title>Complete chloroplast genome sequences of Solanum tuberosum cultivar Desiree and comparative analyses with other Solanaceae genomes.</title>
        <authorList>
            <person name="Gargano D."/>
            <person name="Scotti N."/>
            <person name="Vezzi A."/>
            <person name="Bilardi A."/>
            <person name="Valle G."/>
            <person name="Grillo S."/>
            <person name="Cardi T."/>
        </authorList>
    </citation>
    <scope>NUCLEOTIDE SEQUENCE [LARGE SCALE GENOMIC DNA]</scope>
    <source>
        <strain>cv. Desiree</strain>
    </source>
</reference>
<dbReference type="EMBL" id="DQ231562">
    <property type="protein sequence ID" value="ABB90039.1"/>
    <property type="molecule type" value="Genomic_DNA"/>
</dbReference>
<dbReference type="EMBL" id="DQ386163">
    <property type="protein sequence ID" value="ABD47053.1"/>
    <property type="status" value="ALT_INIT"/>
    <property type="molecule type" value="Genomic_DNA"/>
</dbReference>
<dbReference type="RefSeq" id="YP_635635.1">
    <property type="nucleotide sequence ID" value="NC_008096.2"/>
</dbReference>
<dbReference type="SMR" id="Q2VEI0"/>
<dbReference type="FunCoup" id="Q2VEI0">
    <property type="interactions" value="407"/>
</dbReference>
<dbReference type="STRING" id="4113.Q2VEI0"/>
<dbReference type="GeneID" id="4099962"/>
<dbReference type="KEGG" id="sot:4099962"/>
<dbReference type="InParanoid" id="Q2VEI0"/>
<dbReference type="OrthoDB" id="1926060at2759"/>
<dbReference type="Proteomes" id="UP000011115">
    <property type="component" value="Unassembled WGS sequence"/>
</dbReference>
<dbReference type="GO" id="GO:0009535">
    <property type="term" value="C:chloroplast thylakoid membrane"/>
    <property type="evidence" value="ECO:0007669"/>
    <property type="project" value="UniProtKB-SubCell"/>
</dbReference>
<dbReference type="GO" id="GO:0009523">
    <property type="term" value="C:photosystem II"/>
    <property type="evidence" value="ECO:0007669"/>
    <property type="project" value="UniProtKB-KW"/>
</dbReference>
<dbReference type="GO" id="GO:0016168">
    <property type="term" value="F:chlorophyll binding"/>
    <property type="evidence" value="ECO:0007669"/>
    <property type="project" value="UniProtKB-UniRule"/>
</dbReference>
<dbReference type="GO" id="GO:0045156">
    <property type="term" value="F:electron transporter, transferring electrons within the cyclic electron transport pathway of photosynthesis activity"/>
    <property type="evidence" value="ECO:0007669"/>
    <property type="project" value="InterPro"/>
</dbReference>
<dbReference type="GO" id="GO:0046872">
    <property type="term" value="F:metal ion binding"/>
    <property type="evidence" value="ECO:0007669"/>
    <property type="project" value="UniProtKB-KW"/>
</dbReference>
<dbReference type="GO" id="GO:0009772">
    <property type="term" value="P:photosynthetic electron transport in photosystem II"/>
    <property type="evidence" value="ECO:0007669"/>
    <property type="project" value="InterPro"/>
</dbReference>
<dbReference type="FunFam" id="1.10.10.670:FF:000001">
    <property type="entry name" value="Photosystem II CP43 reaction center protein"/>
    <property type="match status" value="1"/>
</dbReference>
<dbReference type="Gene3D" id="1.10.10.670">
    <property type="entry name" value="photosystem ii from thermosynechococcus elongatus"/>
    <property type="match status" value="1"/>
</dbReference>
<dbReference type="HAMAP" id="MF_01496">
    <property type="entry name" value="PSII_PsbC_CP43"/>
    <property type="match status" value="1"/>
</dbReference>
<dbReference type="InterPro" id="IPR000932">
    <property type="entry name" value="PS_antenna-like"/>
</dbReference>
<dbReference type="InterPro" id="IPR036001">
    <property type="entry name" value="PS_II_antenna-like_sf"/>
</dbReference>
<dbReference type="InterPro" id="IPR005869">
    <property type="entry name" value="PSII_PsbC"/>
</dbReference>
<dbReference type="InterPro" id="IPR044900">
    <property type="entry name" value="PSII_PsbC_sf"/>
</dbReference>
<dbReference type="NCBIfam" id="TIGR01153">
    <property type="entry name" value="psbC"/>
    <property type="match status" value="1"/>
</dbReference>
<dbReference type="Pfam" id="PF00421">
    <property type="entry name" value="PSII"/>
    <property type="match status" value="1"/>
</dbReference>
<dbReference type="SUPFAM" id="SSF161077">
    <property type="entry name" value="Photosystem II antenna protein-like"/>
    <property type="match status" value="1"/>
</dbReference>
<feature type="propeptide" id="PRO_0000431210" evidence="1">
    <location>
        <begin position="1"/>
        <end position="14"/>
    </location>
</feature>
<feature type="chain" id="PRO_0000277578" description="Photosystem II CP43 reaction center protein" evidence="1">
    <location>
        <begin position="15"/>
        <end position="473"/>
    </location>
</feature>
<feature type="transmembrane region" description="Helical" evidence="1">
    <location>
        <begin position="69"/>
        <end position="93"/>
    </location>
</feature>
<feature type="transmembrane region" description="Helical" evidence="1">
    <location>
        <begin position="134"/>
        <end position="155"/>
    </location>
</feature>
<feature type="transmembrane region" description="Helical" evidence="1">
    <location>
        <begin position="178"/>
        <end position="200"/>
    </location>
</feature>
<feature type="transmembrane region" description="Helical" evidence="1">
    <location>
        <begin position="255"/>
        <end position="275"/>
    </location>
</feature>
<feature type="transmembrane region" description="Helical" evidence="1">
    <location>
        <begin position="291"/>
        <end position="312"/>
    </location>
</feature>
<feature type="transmembrane region" description="Helical" evidence="1">
    <location>
        <begin position="447"/>
        <end position="471"/>
    </location>
</feature>
<feature type="binding site" evidence="1">
    <location>
        <position position="367"/>
    </location>
    <ligand>
        <name>[CaMn4O5] cluster</name>
        <dbReference type="ChEBI" id="CHEBI:189552"/>
    </ligand>
</feature>
<feature type="modified residue" description="N-acetylthreonine" evidence="1">
    <location>
        <position position="15"/>
    </location>
</feature>
<feature type="modified residue" description="Phosphothreonine" evidence="1">
    <location>
        <position position="15"/>
    </location>
</feature>
<organism>
    <name type="scientific">Solanum tuberosum</name>
    <name type="common">Potato</name>
    <dbReference type="NCBI Taxonomy" id="4113"/>
    <lineage>
        <taxon>Eukaryota</taxon>
        <taxon>Viridiplantae</taxon>
        <taxon>Streptophyta</taxon>
        <taxon>Embryophyta</taxon>
        <taxon>Tracheophyta</taxon>
        <taxon>Spermatophyta</taxon>
        <taxon>Magnoliopsida</taxon>
        <taxon>eudicotyledons</taxon>
        <taxon>Gunneridae</taxon>
        <taxon>Pentapetalae</taxon>
        <taxon>asterids</taxon>
        <taxon>lamiids</taxon>
        <taxon>Solanales</taxon>
        <taxon>Solanaceae</taxon>
        <taxon>Solanoideae</taxon>
        <taxon>Solaneae</taxon>
        <taxon>Solanum</taxon>
    </lineage>
</organism>
<accession>Q2VEI0</accession>
<accession>Q27S54</accession>
<comment type="function">
    <text evidence="1">One of the components of the core complex of photosystem II (PSII). It binds chlorophyll and helps catalyze the primary light-induced photochemical processes of PSII. PSII is a light-driven water:plastoquinone oxidoreductase, using light energy to abstract electrons from H(2)O, generating O(2) and a proton gradient subsequently used for ATP formation.</text>
</comment>
<comment type="cofactor">
    <text evidence="1">Binds multiple chlorophylls and provides some of the ligands for the Ca-4Mn-5O cluster of the oxygen-evolving complex. It may also provide a ligand for a Cl- that is required for oxygen evolution. PSII binds additional chlorophylls, carotenoids and specific lipids.</text>
</comment>
<comment type="subunit">
    <text evidence="1">PSII is composed of 1 copy each of membrane proteins PsbA, PsbB, PsbC, PsbD, PsbE, PsbF, PsbH, PsbI, PsbJ, PsbK, PsbL, PsbM, PsbT, PsbX, PsbY, PsbZ, Psb30/Ycf12, at least 3 peripheral proteins of the oxygen-evolving complex and a large number of cofactors. It forms dimeric complexes.</text>
</comment>
<comment type="subcellular location">
    <subcellularLocation>
        <location evidence="1">Plastid</location>
        <location evidence="1">Chloroplast thylakoid membrane</location>
        <topology evidence="1">Multi-pass membrane protein</topology>
    </subcellularLocation>
</comment>
<comment type="similarity">
    <text evidence="1">Belongs to the PsbB/PsbC family. PsbC subfamily.</text>
</comment>
<comment type="sequence caution" evidence="2">
    <conflict type="erroneous initiation">
        <sequence resource="EMBL-CDS" id="ABD47053"/>
    </conflict>
    <text>Truncated N-terminus.</text>
</comment>